<comment type="function">
    <text>Has a stimulatory role for the envelope antigen F1 secretion. It seems to interact with the subunit polypeptide and to prevent it from digestion by a protease.</text>
</comment>
<comment type="interaction">
    <interactant intactId="EBI-1036581">
        <id>P26926</id>
    </interactant>
    <interactant intactId="EBI-1036572">
        <id>P26948</id>
        <label>caf1</label>
    </interactant>
    <organismsDiffer>false</organismsDiffer>
    <experiments>6</experiments>
</comment>
<comment type="subcellular location">
    <subcellularLocation>
        <location>Periplasm</location>
    </subcellularLocation>
</comment>
<comment type="similarity">
    <text evidence="2">Belongs to the periplasmic pilus chaperone family.</text>
</comment>
<comment type="sequence caution" evidence="2">
    <conflict type="erroneous initiation">
        <sequence resource="EMBL-CDS" id="AAC82756"/>
    </conflict>
</comment>
<comment type="sequence caution" evidence="2">
    <conflict type="erroneous initiation">
        <sequence resource="EMBL-CDS" id="AAS58716"/>
    </conflict>
</comment>
<reference key="1">
    <citation type="journal article" date="1991" name="FEBS Lett.">
        <title>Expression of the envelope antigen F1 of Yersinia pestis is mediated by the product of caf1M gene having homology with the chaperone protein PapD of Escherichia coli.</title>
        <authorList>
            <person name="Galyov E.E."/>
            <person name="Karlishev A.V."/>
            <person name="Chernovskaya T.V."/>
            <person name="Dolgikh D.A."/>
            <person name="Smirnov O.Y."/>
            <person name="Volkovoy K.I."/>
            <person name="Abramov V.M."/>
            <person name="Zav'Yalov V.P."/>
        </authorList>
    </citation>
    <scope>NUCLEOTIDE SEQUENCE [GENOMIC DNA]</scope>
    <source>
        <plasmid>pFra</plasmid>
    </source>
</reference>
<reference key="2">
    <citation type="journal article" date="1998" name="J. Bacteriol.">
        <title>Structural organization of virulence-associated plasmids of Yersinia pestis.</title>
        <authorList>
            <person name="Hu P."/>
            <person name="Elliott J."/>
            <person name="McCready P."/>
            <person name="Skowronski E."/>
            <person name="Garnes J."/>
            <person name="Kobayashi A."/>
            <person name="Brubaker R.R."/>
            <person name="Garcia E."/>
        </authorList>
    </citation>
    <scope>NUCLEOTIDE SEQUENCE [GENOMIC DNA]</scope>
    <source>
        <strain>KIM5 / Biovar Mediaevalis</strain>
        <plasmid>pMT1 (pMT-1)</plasmid>
    </source>
</reference>
<reference key="3">
    <citation type="journal article" date="1998" name="Infect. Immun.">
        <title>Complete DNA sequence and detailed analysis of the Yersinia pestis KIM5 plasmid encoding murine toxin and capsular antigen.</title>
        <authorList>
            <person name="Lindler L.E."/>
            <person name="Plano G.V."/>
            <person name="Burland V."/>
            <person name="Mayhew G.F."/>
            <person name="Blattner F.R."/>
        </authorList>
    </citation>
    <scope>NUCLEOTIDE SEQUENCE [LARGE SCALE GENOMIC DNA]</scope>
    <source>
        <strain>KIM10+ / Biovar Mediaevalis</strain>
        <plasmid>pMT1 (pMT-1)</plasmid>
    </source>
</reference>
<reference key="4">
    <citation type="journal article" date="2001" name="Nature">
        <title>Genome sequence of Yersinia pestis, the causative agent of plague.</title>
        <authorList>
            <person name="Parkhill J."/>
            <person name="Wren B.W."/>
            <person name="Thomson N.R."/>
            <person name="Titball R.W."/>
            <person name="Holden M.T.G."/>
            <person name="Prentice M.B."/>
            <person name="Sebaihia M."/>
            <person name="James K.D."/>
            <person name="Churcher C.M."/>
            <person name="Mungall K.L."/>
            <person name="Baker S."/>
            <person name="Basham D."/>
            <person name="Bentley S.D."/>
            <person name="Brooks K."/>
            <person name="Cerdeno-Tarraga A.-M."/>
            <person name="Chillingworth T."/>
            <person name="Cronin A."/>
            <person name="Davies R.M."/>
            <person name="Davis P."/>
            <person name="Dougan G."/>
            <person name="Feltwell T."/>
            <person name="Hamlin N."/>
            <person name="Holroyd S."/>
            <person name="Jagels K."/>
            <person name="Karlyshev A.V."/>
            <person name="Leather S."/>
            <person name="Moule S."/>
            <person name="Oyston P.C.F."/>
            <person name="Quail M.A."/>
            <person name="Rutherford K.M."/>
            <person name="Simmonds M."/>
            <person name="Skelton J."/>
            <person name="Stevens K."/>
            <person name="Whitehead S."/>
            <person name="Barrell B.G."/>
        </authorList>
    </citation>
    <scope>NUCLEOTIDE SEQUENCE [LARGE SCALE GENOMIC DNA]</scope>
    <source>
        <strain>CO-92 / Biovar Orientalis</strain>
        <plasmid>pMT1 (pMT-1)</plasmid>
    </source>
</reference>
<reference key="5">
    <citation type="journal article" date="2004" name="DNA Res.">
        <title>Complete genome sequence of Yersinia pestis strain 91001, an isolate avirulent to humans.</title>
        <authorList>
            <person name="Song Y."/>
            <person name="Tong Z."/>
            <person name="Wang J."/>
            <person name="Wang L."/>
            <person name="Guo Z."/>
            <person name="Han Y."/>
            <person name="Zhang J."/>
            <person name="Pei D."/>
            <person name="Zhou D."/>
            <person name="Qin H."/>
            <person name="Pang X."/>
            <person name="Han Y."/>
            <person name="Zhai J."/>
            <person name="Li M."/>
            <person name="Cui B."/>
            <person name="Qi Z."/>
            <person name="Jin L."/>
            <person name="Dai R."/>
            <person name="Chen F."/>
            <person name="Li S."/>
            <person name="Ye C."/>
            <person name="Du Z."/>
            <person name="Lin W."/>
            <person name="Wang J."/>
            <person name="Yu J."/>
            <person name="Yang H."/>
            <person name="Wang J."/>
            <person name="Huang P."/>
            <person name="Yang R."/>
        </authorList>
    </citation>
    <scope>NUCLEOTIDE SEQUENCE [LARGE SCALE GENOMIC DNA]</scope>
    <source>
        <strain>91001 / Biovar Mediaevalis</strain>
        <plasmid>pMT1 (pMT-1)</plasmid>
    </source>
</reference>
<geneLocation type="plasmid">
    <name>pMT1</name>
    <name>pMT-1</name>
</geneLocation>
<geneLocation type="plasmid">
    <name>pFra</name>
</geneLocation>
<gene>
    <name type="primary">caf1M</name>
    <name type="ordered locus">YPMT1.82</name>
    <name type="ordered locus">Y1098</name>
    <name type="ordered locus">YP_pMT084</name>
</gene>
<protein>
    <recommendedName>
        <fullName>Chaperone protein caf1M</fullName>
    </recommendedName>
    <alternativeName>
        <fullName>Capsule protein fraction 1</fullName>
    </alternativeName>
</protein>
<dbReference type="EMBL" id="X61996">
    <property type="protein sequence ID" value="CAA43967.1"/>
    <property type="molecule type" value="Genomic_DNA"/>
</dbReference>
<dbReference type="EMBL" id="AF074611">
    <property type="protein sequence ID" value="AAC82756.1"/>
    <property type="status" value="ALT_INIT"/>
    <property type="molecule type" value="Genomic_DNA"/>
</dbReference>
<dbReference type="EMBL" id="AF053947">
    <property type="protein sequence ID" value="AAC13220.1"/>
    <property type="molecule type" value="Genomic_DNA"/>
</dbReference>
<dbReference type="EMBL" id="AL117211">
    <property type="protein sequence ID" value="CAB55264.1"/>
    <property type="molecule type" value="Genomic_DNA"/>
</dbReference>
<dbReference type="EMBL" id="AE017045">
    <property type="protein sequence ID" value="AAS58716.1"/>
    <property type="status" value="ALT_INIT"/>
    <property type="molecule type" value="Genomic_DNA"/>
</dbReference>
<dbReference type="PIR" id="S16965">
    <property type="entry name" value="S16965"/>
</dbReference>
<dbReference type="PIR" id="T14704">
    <property type="entry name" value="T14704"/>
</dbReference>
<dbReference type="PIR" id="T15013">
    <property type="entry name" value="T15013"/>
</dbReference>
<dbReference type="RefSeq" id="NP_395428.1">
    <property type="nucleotide sequence ID" value="NC_003134.1"/>
</dbReference>
<dbReference type="RefSeq" id="NP_857694.1">
    <property type="nucleotide sequence ID" value="NC_004835.1"/>
</dbReference>
<dbReference type="RefSeq" id="WP_002211762.1">
    <property type="nucleotide sequence ID" value="NZ_WUCM01000058.1"/>
</dbReference>
<dbReference type="PDB" id="1P5U">
    <property type="method" value="X-ray"/>
    <property type="resolution" value="1.99 A"/>
    <property type="chains" value="A=24-258"/>
</dbReference>
<dbReference type="PDB" id="1P5V">
    <property type="method" value="X-ray"/>
    <property type="resolution" value="1.70 A"/>
    <property type="chains" value="A=24-258"/>
</dbReference>
<dbReference type="PDB" id="1Z9S">
    <property type="method" value="X-ray"/>
    <property type="resolution" value="2.20 A"/>
    <property type="chains" value="A=24-258"/>
</dbReference>
<dbReference type="PDB" id="2OS7">
    <property type="method" value="X-ray"/>
    <property type="resolution" value="2.90 A"/>
    <property type="chains" value="A/B/C/D/E/F=24-258"/>
</dbReference>
<dbReference type="PDB" id="3DOS">
    <property type="method" value="X-ray"/>
    <property type="resolution" value="2.40 A"/>
    <property type="chains" value="A/D=24-258"/>
</dbReference>
<dbReference type="PDB" id="3DPB">
    <property type="method" value="X-ray"/>
    <property type="resolution" value="2.20 A"/>
    <property type="chains" value="A=24-258"/>
</dbReference>
<dbReference type="PDB" id="3DSN">
    <property type="method" value="X-ray"/>
    <property type="resolution" value="2.20 A"/>
    <property type="chains" value="A/D=24-258"/>
</dbReference>
<dbReference type="PDB" id="4AY0">
    <property type="method" value="X-ray"/>
    <property type="resolution" value="1.52 A"/>
    <property type="chains" value="A/B=24-258"/>
</dbReference>
<dbReference type="PDB" id="4AYF">
    <property type="method" value="X-ray"/>
    <property type="resolution" value="2.07 A"/>
    <property type="chains" value="A=24-258"/>
</dbReference>
<dbReference type="PDB" id="4AZ8">
    <property type="method" value="X-ray"/>
    <property type="resolution" value="2.65 A"/>
    <property type="chains" value="A=24-258"/>
</dbReference>
<dbReference type="PDB" id="4B0M">
    <property type="method" value="X-ray"/>
    <property type="resolution" value="1.80 A"/>
    <property type="chains" value="M=24-258"/>
</dbReference>
<dbReference type="PDBsum" id="1P5U"/>
<dbReference type="PDBsum" id="1P5V"/>
<dbReference type="PDBsum" id="1Z9S"/>
<dbReference type="PDBsum" id="2OS7"/>
<dbReference type="PDBsum" id="3DOS"/>
<dbReference type="PDBsum" id="3DPB"/>
<dbReference type="PDBsum" id="3DSN"/>
<dbReference type="PDBsum" id="4AY0"/>
<dbReference type="PDBsum" id="4AYF"/>
<dbReference type="PDBsum" id="4AZ8"/>
<dbReference type="PDBsum" id="4B0M"/>
<dbReference type="SMR" id="P26926"/>
<dbReference type="DIP" id="DIP-35244N"/>
<dbReference type="IntAct" id="P26926">
    <property type="interactions" value="3"/>
</dbReference>
<dbReference type="MINT" id="P26926"/>
<dbReference type="DNASU" id="1149242"/>
<dbReference type="EnsemblBacteria" id="AAS58716">
    <property type="protein sequence ID" value="AAS58716"/>
    <property type="gene ID" value="YP_pMT084"/>
</dbReference>
<dbReference type="GeneID" id="57977634"/>
<dbReference type="KEGG" id="ype:YPMT1.82"/>
<dbReference type="KEGG" id="ypk:caf1M.pl"/>
<dbReference type="KEGG" id="ypm:YP_pMT084"/>
<dbReference type="PATRIC" id="fig|214092.21.peg.210"/>
<dbReference type="HOGENOM" id="CLU_070768_2_2_6"/>
<dbReference type="OMA" id="LQWLCVK"/>
<dbReference type="EvolutionaryTrace" id="P26926"/>
<dbReference type="PRO" id="PR:P26926"/>
<dbReference type="Proteomes" id="UP000000815">
    <property type="component" value="Plasmid pMT1"/>
</dbReference>
<dbReference type="Proteomes" id="UP000001019">
    <property type="component" value="Plasmid pMT1"/>
</dbReference>
<dbReference type="Proteomes" id="UP000002490">
    <property type="component" value="Plasmid pMT-1"/>
</dbReference>
<dbReference type="GO" id="GO:0030288">
    <property type="term" value="C:outer membrane-bounded periplasmic space"/>
    <property type="evidence" value="ECO:0000318"/>
    <property type="project" value="GO_Central"/>
</dbReference>
<dbReference type="GO" id="GO:0044183">
    <property type="term" value="F:protein folding chaperone"/>
    <property type="evidence" value="ECO:0000318"/>
    <property type="project" value="GO_Central"/>
</dbReference>
<dbReference type="GO" id="GO:0071555">
    <property type="term" value="P:cell wall organization"/>
    <property type="evidence" value="ECO:0007669"/>
    <property type="project" value="InterPro"/>
</dbReference>
<dbReference type="GO" id="GO:0061077">
    <property type="term" value="P:chaperone-mediated protein folding"/>
    <property type="evidence" value="ECO:0000318"/>
    <property type="project" value="GO_Central"/>
</dbReference>
<dbReference type="Gene3D" id="2.60.40.10">
    <property type="entry name" value="Immunoglobulins"/>
    <property type="match status" value="2"/>
</dbReference>
<dbReference type="InterPro" id="IPR013783">
    <property type="entry name" value="Ig-like_fold"/>
</dbReference>
<dbReference type="InterPro" id="IPR008962">
    <property type="entry name" value="PapD-like_sf"/>
</dbReference>
<dbReference type="InterPro" id="IPR050643">
    <property type="entry name" value="Periplasmic_pilus_chap"/>
</dbReference>
<dbReference type="InterPro" id="IPR036316">
    <property type="entry name" value="Pili_assmbl_chap_C_dom_sf"/>
</dbReference>
<dbReference type="InterPro" id="IPR001829">
    <property type="entry name" value="Pili_assmbl_chaperone_bac"/>
</dbReference>
<dbReference type="InterPro" id="IPR016148">
    <property type="entry name" value="Pili_assmbl_chaperone_C"/>
</dbReference>
<dbReference type="InterPro" id="IPR018046">
    <property type="entry name" value="Pili_assmbl_chaperone_CS"/>
</dbReference>
<dbReference type="InterPro" id="IPR016147">
    <property type="entry name" value="Pili_assmbl_chaperone_N"/>
</dbReference>
<dbReference type="PANTHER" id="PTHR30251:SF9">
    <property type="entry name" value="CHAPERONE PROTEIN CAF1M"/>
    <property type="match status" value="1"/>
</dbReference>
<dbReference type="PANTHER" id="PTHR30251">
    <property type="entry name" value="PILUS ASSEMBLY CHAPERONE"/>
    <property type="match status" value="1"/>
</dbReference>
<dbReference type="Pfam" id="PF02753">
    <property type="entry name" value="PapD_C"/>
    <property type="match status" value="1"/>
</dbReference>
<dbReference type="Pfam" id="PF00345">
    <property type="entry name" value="PapD_N"/>
    <property type="match status" value="1"/>
</dbReference>
<dbReference type="PRINTS" id="PR00969">
    <property type="entry name" value="CHAPERONPILI"/>
</dbReference>
<dbReference type="SUPFAM" id="SSF49354">
    <property type="entry name" value="PapD-like"/>
    <property type="match status" value="1"/>
</dbReference>
<dbReference type="SUPFAM" id="SSF49584">
    <property type="entry name" value="Periplasmic chaperone C-domain"/>
    <property type="match status" value="1"/>
</dbReference>
<dbReference type="PROSITE" id="PS00635">
    <property type="entry name" value="PILI_CHAPERONE"/>
    <property type="match status" value="1"/>
</dbReference>
<organism>
    <name type="scientific">Yersinia pestis</name>
    <dbReference type="NCBI Taxonomy" id="632"/>
    <lineage>
        <taxon>Bacteria</taxon>
        <taxon>Pseudomonadati</taxon>
        <taxon>Pseudomonadota</taxon>
        <taxon>Gammaproteobacteria</taxon>
        <taxon>Enterobacterales</taxon>
        <taxon>Yersiniaceae</taxon>
        <taxon>Yersinia</taxon>
    </lineage>
</organism>
<keyword id="KW-0002">3D-structure</keyword>
<keyword id="KW-0143">Chaperone</keyword>
<keyword id="KW-1015">Disulfide bond</keyword>
<keyword id="KW-0393">Immunoglobulin domain</keyword>
<keyword id="KW-0574">Periplasm</keyword>
<keyword id="KW-0614">Plasmid</keyword>
<keyword id="KW-1185">Reference proteome</keyword>
<keyword id="KW-0732">Signal</keyword>
<evidence type="ECO:0000255" key="1"/>
<evidence type="ECO:0000305" key="2"/>
<evidence type="ECO:0007829" key="3">
    <source>
        <dbReference type="PDB" id="1P5V"/>
    </source>
</evidence>
<evidence type="ECO:0007829" key="4">
    <source>
        <dbReference type="PDB" id="2OS7"/>
    </source>
</evidence>
<evidence type="ECO:0007829" key="5">
    <source>
        <dbReference type="PDB" id="4AY0"/>
    </source>
</evidence>
<evidence type="ECO:0007829" key="6">
    <source>
        <dbReference type="PDB" id="4B0M"/>
    </source>
</evidence>
<sequence>MILNRLSTLGIITFGMLSFAANSAQPDIKFASKEYGVTIGESRIIYPLDAAGVMVSVKNTQDYPVLIQSRIYDENKEKESEDPFVVTPPLFRLDAKQQNSLRIAQAGGVFPRDKESLKWLCVKGIPPKDEDIWVDDATNKQKFNPDKDVGVFVQFAINNCIKLLVRPNELKGTPIQFAENLSWKVDGGKLIAENPSPFYMNIGELTFGGKSIPSHYIPPKSTWAFDLPKGLAGARNVSWRIINDQGGLDRLYSKNVTL</sequence>
<proteinExistence type="evidence at protein level"/>
<accession>P26926</accession>
<accession>O68774</accession>
<accession>Q9RIB9</accession>
<name>CAF1M_YERPE</name>
<feature type="signal peptide" evidence="1">
    <location>
        <begin position="1"/>
        <end position="20"/>
    </location>
</feature>
<feature type="chain" id="PRO_0000009264" description="Chaperone protein caf1M">
    <location>
        <begin position="21"/>
        <end position="258"/>
    </location>
</feature>
<feature type="disulfide bond" evidence="1">
    <location>
        <begin position="121"/>
        <end position="160"/>
    </location>
</feature>
<feature type="sequence conflict" description="In Ref. 1; CAA43967." evidence="2" ref="1">
    <original>N</original>
    <variation>K</variation>
    <location>
        <position position="180"/>
    </location>
</feature>
<feature type="helix" evidence="4">
    <location>
        <begin position="33"/>
        <end position="36"/>
    </location>
</feature>
<feature type="strand" evidence="5">
    <location>
        <begin position="37"/>
        <end position="40"/>
    </location>
</feature>
<feature type="strand" evidence="5">
    <location>
        <begin position="43"/>
        <end position="47"/>
    </location>
</feature>
<feature type="strand" evidence="5">
    <location>
        <begin position="53"/>
        <end position="58"/>
    </location>
</feature>
<feature type="strand" evidence="5">
    <location>
        <begin position="61"/>
        <end position="63"/>
    </location>
</feature>
<feature type="strand" evidence="5">
    <location>
        <begin position="65"/>
        <end position="72"/>
    </location>
</feature>
<feature type="strand" evidence="4">
    <location>
        <begin position="78"/>
        <end position="80"/>
    </location>
</feature>
<feature type="strand" evidence="5">
    <location>
        <begin position="83"/>
        <end position="93"/>
    </location>
</feature>
<feature type="strand" evidence="5">
    <location>
        <begin position="98"/>
        <end position="105"/>
    </location>
</feature>
<feature type="strand" evidence="5">
    <location>
        <begin position="112"/>
        <end position="114"/>
    </location>
</feature>
<feature type="strand" evidence="5">
    <location>
        <begin position="116"/>
        <end position="125"/>
    </location>
</feature>
<feature type="turn" evidence="4">
    <location>
        <begin position="145"/>
        <end position="147"/>
    </location>
</feature>
<feature type="strand" evidence="4">
    <location>
        <begin position="151"/>
        <end position="156"/>
    </location>
</feature>
<feature type="strand" evidence="5">
    <location>
        <begin position="160"/>
        <end position="166"/>
    </location>
</feature>
<feature type="strand" evidence="3">
    <location>
        <begin position="168"/>
        <end position="170"/>
    </location>
</feature>
<feature type="helix" evidence="5">
    <location>
        <begin position="174"/>
        <end position="176"/>
    </location>
</feature>
<feature type="helix" evidence="5">
    <location>
        <begin position="178"/>
        <end position="180"/>
    </location>
</feature>
<feature type="strand" evidence="5">
    <location>
        <begin position="182"/>
        <end position="186"/>
    </location>
</feature>
<feature type="strand" evidence="5">
    <location>
        <begin position="189"/>
        <end position="194"/>
    </location>
</feature>
<feature type="strand" evidence="5">
    <location>
        <begin position="196"/>
        <end position="198"/>
    </location>
</feature>
<feature type="strand" evidence="5">
    <location>
        <begin position="200"/>
        <end position="207"/>
    </location>
</feature>
<feature type="strand" evidence="5">
    <location>
        <begin position="221"/>
        <end position="226"/>
    </location>
</feature>
<feature type="turn" evidence="6">
    <location>
        <begin position="229"/>
        <end position="231"/>
    </location>
</feature>
<feature type="strand" evidence="5">
    <location>
        <begin position="236"/>
        <end position="242"/>
    </location>
</feature>
<feature type="strand" evidence="4">
    <location>
        <begin position="246"/>
        <end position="248"/>
    </location>
</feature>
<feature type="strand" evidence="5">
    <location>
        <begin position="252"/>
        <end position="255"/>
    </location>
</feature>